<reference key="1">
    <citation type="journal article" date="2002" name="Nature">
        <title>The genome sequence of Schizosaccharomyces pombe.</title>
        <authorList>
            <person name="Wood V."/>
            <person name="Gwilliam R."/>
            <person name="Rajandream M.A."/>
            <person name="Lyne M.H."/>
            <person name="Lyne R."/>
            <person name="Stewart A."/>
            <person name="Sgouros J.G."/>
            <person name="Peat N."/>
            <person name="Hayles J."/>
            <person name="Baker S.G."/>
            <person name="Basham D."/>
            <person name="Bowman S."/>
            <person name="Brooks K."/>
            <person name="Brown D."/>
            <person name="Brown S."/>
            <person name="Chillingworth T."/>
            <person name="Churcher C.M."/>
            <person name="Collins M."/>
            <person name="Connor R."/>
            <person name="Cronin A."/>
            <person name="Davis P."/>
            <person name="Feltwell T."/>
            <person name="Fraser A."/>
            <person name="Gentles S."/>
            <person name="Goble A."/>
            <person name="Hamlin N."/>
            <person name="Harris D.E."/>
            <person name="Hidalgo J."/>
            <person name="Hodgson G."/>
            <person name="Holroyd S."/>
            <person name="Hornsby T."/>
            <person name="Howarth S."/>
            <person name="Huckle E.J."/>
            <person name="Hunt S."/>
            <person name="Jagels K."/>
            <person name="James K.D."/>
            <person name="Jones L."/>
            <person name="Jones M."/>
            <person name="Leather S."/>
            <person name="McDonald S."/>
            <person name="McLean J."/>
            <person name="Mooney P."/>
            <person name="Moule S."/>
            <person name="Mungall K.L."/>
            <person name="Murphy L.D."/>
            <person name="Niblett D."/>
            <person name="Odell C."/>
            <person name="Oliver K."/>
            <person name="O'Neil S."/>
            <person name="Pearson D."/>
            <person name="Quail M.A."/>
            <person name="Rabbinowitsch E."/>
            <person name="Rutherford K.M."/>
            <person name="Rutter S."/>
            <person name="Saunders D."/>
            <person name="Seeger K."/>
            <person name="Sharp S."/>
            <person name="Skelton J."/>
            <person name="Simmonds M.N."/>
            <person name="Squares R."/>
            <person name="Squares S."/>
            <person name="Stevens K."/>
            <person name="Taylor K."/>
            <person name="Taylor R.G."/>
            <person name="Tivey A."/>
            <person name="Walsh S.V."/>
            <person name="Warren T."/>
            <person name="Whitehead S."/>
            <person name="Woodward J.R."/>
            <person name="Volckaert G."/>
            <person name="Aert R."/>
            <person name="Robben J."/>
            <person name="Grymonprez B."/>
            <person name="Weltjens I."/>
            <person name="Vanstreels E."/>
            <person name="Rieger M."/>
            <person name="Schaefer M."/>
            <person name="Mueller-Auer S."/>
            <person name="Gabel C."/>
            <person name="Fuchs M."/>
            <person name="Duesterhoeft A."/>
            <person name="Fritzc C."/>
            <person name="Holzer E."/>
            <person name="Moestl D."/>
            <person name="Hilbert H."/>
            <person name="Borzym K."/>
            <person name="Langer I."/>
            <person name="Beck A."/>
            <person name="Lehrach H."/>
            <person name="Reinhardt R."/>
            <person name="Pohl T.M."/>
            <person name="Eger P."/>
            <person name="Zimmermann W."/>
            <person name="Wedler H."/>
            <person name="Wambutt R."/>
            <person name="Purnelle B."/>
            <person name="Goffeau A."/>
            <person name="Cadieu E."/>
            <person name="Dreano S."/>
            <person name="Gloux S."/>
            <person name="Lelaure V."/>
            <person name="Mottier S."/>
            <person name="Galibert F."/>
            <person name="Aves S.J."/>
            <person name="Xiang Z."/>
            <person name="Hunt C."/>
            <person name="Moore K."/>
            <person name="Hurst S.M."/>
            <person name="Lucas M."/>
            <person name="Rochet M."/>
            <person name="Gaillardin C."/>
            <person name="Tallada V.A."/>
            <person name="Garzon A."/>
            <person name="Thode G."/>
            <person name="Daga R.R."/>
            <person name="Cruzado L."/>
            <person name="Jimenez J."/>
            <person name="Sanchez M."/>
            <person name="del Rey F."/>
            <person name="Benito J."/>
            <person name="Dominguez A."/>
            <person name="Revuelta J.L."/>
            <person name="Moreno S."/>
            <person name="Armstrong J."/>
            <person name="Forsburg S.L."/>
            <person name="Cerutti L."/>
            <person name="Lowe T."/>
            <person name="McCombie W.R."/>
            <person name="Paulsen I."/>
            <person name="Potashkin J."/>
            <person name="Shpakovski G.V."/>
            <person name="Ussery D."/>
            <person name="Barrell B.G."/>
            <person name="Nurse P."/>
        </authorList>
    </citation>
    <scope>NUCLEOTIDE SEQUENCE [LARGE SCALE GENOMIC DNA]</scope>
    <source>
        <strain>972 / ATCC 24843</strain>
    </source>
</reference>
<reference key="2">
    <citation type="journal article" date="2006" name="Nat. Biotechnol.">
        <title>ORFeome cloning and global analysis of protein localization in the fission yeast Schizosaccharomyces pombe.</title>
        <authorList>
            <person name="Matsuyama A."/>
            <person name="Arai R."/>
            <person name="Yashiroda Y."/>
            <person name="Shirai A."/>
            <person name="Kamata A."/>
            <person name="Sekido S."/>
            <person name="Kobayashi Y."/>
            <person name="Hashimoto A."/>
            <person name="Hamamoto M."/>
            <person name="Hiraoka Y."/>
            <person name="Horinouchi S."/>
            <person name="Yoshida M."/>
        </authorList>
    </citation>
    <scope>SUBCELLULAR LOCATION [LARGE SCALE ANALYSIS]</scope>
</reference>
<reference key="3">
    <citation type="journal article" date="2011" name="Nucleic Acids Res.">
        <title>A genome wide study in fission yeast reveals nine PPR proteins that regulate mitochondrial gene expression.</title>
        <authorList>
            <person name="Kuhl I."/>
            <person name="Dujeancourt L."/>
            <person name="Gaisne M."/>
            <person name="Herbert C.J."/>
            <person name="Bonnefoy N."/>
        </authorList>
    </citation>
    <scope>DOMAIN</scope>
    <scope>SUBCELLULAR LOCATION</scope>
    <scope>DISRUPTION PHENOTYPE</scope>
    <scope>FUNCTION</scope>
</reference>
<proteinExistence type="predicted"/>
<accession>O42910</accession>
<organism>
    <name type="scientific">Schizosaccharomyces pombe (strain 972 / ATCC 24843)</name>
    <name type="common">Fission yeast</name>
    <dbReference type="NCBI Taxonomy" id="284812"/>
    <lineage>
        <taxon>Eukaryota</taxon>
        <taxon>Fungi</taxon>
        <taxon>Dikarya</taxon>
        <taxon>Ascomycota</taxon>
        <taxon>Taphrinomycotina</taxon>
        <taxon>Schizosaccharomycetes</taxon>
        <taxon>Schizosaccharomycetales</taxon>
        <taxon>Schizosaccharomycetaceae</taxon>
        <taxon>Schizosaccharomyces</taxon>
    </lineage>
</organism>
<comment type="function">
    <text evidence="3">Mitochondrial RNA-binding protein required for the stability of the atp6 mRNA.</text>
</comment>
<comment type="subcellular location">
    <subcellularLocation>
        <location evidence="2 3">Mitochondrion</location>
    </subcellularLocation>
</comment>
<comment type="disruption phenotype">
    <text evidence="3">Impairs growth on galactose, leads to low viability on glucose containing G418, and leads to strongly sensitivity to antimycin A on glucose medium.</text>
</comment>
<gene>
    <name type="primary">ppr7</name>
    <name type="ORF">SPBC16A3.03c</name>
</gene>
<feature type="transit peptide" description="Mitochondrion" evidence="1">
    <location>
        <begin position="1"/>
        <end position="29"/>
    </location>
</feature>
<feature type="chain" id="PRO_0000116511" description="Pentatricopeptide repeat-containing protein 7, mitochondrial">
    <location>
        <begin position="30"/>
        <end position="658"/>
    </location>
</feature>
<feature type="repeat" description="PPR 1">
    <location>
        <begin position="130"/>
        <end position="164"/>
    </location>
</feature>
<feature type="repeat" description="PPR 2">
    <location>
        <begin position="220"/>
        <end position="254"/>
    </location>
</feature>
<name>PPR7_SCHPO</name>
<keyword id="KW-0496">Mitochondrion</keyword>
<keyword id="KW-1185">Reference proteome</keyword>
<keyword id="KW-0677">Repeat</keyword>
<keyword id="KW-0809">Transit peptide</keyword>
<dbReference type="EMBL" id="CU329671">
    <property type="protein sequence ID" value="CAA16854.1"/>
    <property type="molecule type" value="Genomic_DNA"/>
</dbReference>
<dbReference type="PIR" id="T39549">
    <property type="entry name" value="T39549"/>
</dbReference>
<dbReference type="RefSeq" id="NP_596786.1">
    <property type="nucleotide sequence ID" value="NM_001023807.2"/>
</dbReference>
<dbReference type="BioGRID" id="276478">
    <property type="interactions" value="2"/>
</dbReference>
<dbReference type="STRING" id="284812.O42910"/>
<dbReference type="iPTMnet" id="O42910"/>
<dbReference type="PaxDb" id="4896-SPBC16A3.03c.1"/>
<dbReference type="EnsemblFungi" id="SPBC16A3.03c.1">
    <property type="protein sequence ID" value="SPBC16A3.03c.1:pep"/>
    <property type="gene ID" value="SPBC16A3.03c"/>
</dbReference>
<dbReference type="GeneID" id="2539934"/>
<dbReference type="KEGG" id="spo:2539934"/>
<dbReference type="PomBase" id="SPBC16A3.03c">
    <property type="gene designation" value="ppr7"/>
</dbReference>
<dbReference type="VEuPathDB" id="FungiDB:SPBC16A3.03c"/>
<dbReference type="HOGENOM" id="CLU_416872_0_0_1"/>
<dbReference type="InParanoid" id="O42910"/>
<dbReference type="OMA" id="KYWHSAP"/>
<dbReference type="PRO" id="PR:O42910"/>
<dbReference type="Proteomes" id="UP000002485">
    <property type="component" value="Chromosome II"/>
</dbReference>
<dbReference type="GO" id="GO:0005759">
    <property type="term" value="C:mitochondrial matrix"/>
    <property type="evidence" value="ECO:0000305"/>
    <property type="project" value="PomBase"/>
</dbReference>
<dbReference type="GO" id="GO:0005739">
    <property type="term" value="C:mitochondrion"/>
    <property type="evidence" value="ECO:0000314"/>
    <property type="project" value="PomBase"/>
</dbReference>
<dbReference type="GO" id="GO:0140053">
    <property type="term" value="P:mitochondrial gene expression"/>
    <property type="evidence" value="ECO:0000315"/>
    <property type="project" value="PomBase"/>
</dbReference>
<dbReference type="GO" id="GO:0090615">
    <property type="term" value="P:mitochondrial mRNA processing"/>
    <property type="evidence" value="ECO:0000266"/>
    <property type="project" value="PomBase"/>
</dbReference>
<evidence type="ECO:0000255" key="1"/>
<evidence type="ECO:0000269" key="2">
    <source>
    </source>
</evidence>
<evidence type="ECO:0000269" key="3">
    <source>
    </source>
</evidence>
<sequence length="658" mass="76718">MRNCVSPLLFAWTKHLRLREFKIPFPNRLVVRSLNQLSVHHEKVTGCRPRQASSDELHKYSKSASNEAFLSSFAENQLFHKCLPSSAGAVLSENDLMYIIRKVSEVYADNKTEKVTVPFDKHKNPFLIYVKKRFAECFDKNPDLCLIVYSKLEVETLAKITPIWINVAKKNKKEDFLVELCLRFLERFRSCNLTEQAILYQNFRENWWSNIKLPQNLKSLYVELCLVYHFHNSHLGMDSSTVSNLKRFCFSESLGHIFAPLRFQNQQLPLQHVYAFLFSIAYRDNQVDTAHFLYKQWSRAGMGPLPKDAFIKFVQLLSKNRNWVLMRDIVQLEEYNSYLLDHRIVSAFLKPLSEKGNYKDILSLISVWQHSVWRPSLAYLQVVYSFSMRALLVNRQYSSAFAFFWKIDPYIRNERLVSQMLQAASQLHYHDLILYVINTYYSGNIMKNLGNKDLICITQSSPPCNISGIKPGSLKLSPTTNTVLAKSICYWLNDAMALLFLLENQLNCKHSLFQRKSLIILLNGILNCPHSSYDLQFRAVSLLTGRIRLNVDFEVSVLASQLVFFVKHRDFKRTLITMKAISKLQKNFDVRIWNYWLVALIQQKLYSRAVKVYSKLICSSAVRNDTTRSLIRLIPKSYFKSYPLLKESETEKKTNSAL</sequence>
<protein>
    <recommendedName>
        <fullName>Pentatricopeptide repeat-containing protein 7, mitochondrial</fullName>
    </recommendedName>
</protein>